<sequence>MDAFKQQLEQLSAQNQYRSIPDLVHQGRYIMRENRKMLNMSSNDYLGLASNENLRQSFLQQYGGNFPSFTSSSSRLLTGNFPIYTDLEELVAQRFQRESALLFNSGYHANIGILPALTTKSLILADKLVHASMIDGIRLSQCEFFRYRHNDYEHLKNLLEKNVGKFDRTFIVTESVFSMDGDVADLKQLVQLKKQFPNTYLYVDEAHAIGVYGKNGLGIAERANVIADIDLLVGTFGKALASMGAYVVCDQILKECLINQMRPLIFSTALPPFNVAWTYFIFERLPQFSKERSHLERLSAFLRQEVEHRTQIMPSQTCIVPYILGENEATLAKAKDLQEQGYYCLPIRPPTVPKGTSRIRLSLTADMTMDEVKQFVACL</sequence>
<proteinExistence type="inferred from homology"/>
<dbReference type="EC" id="2.3.1.47"/>
<dbReference type="EMBL" id="CP000057">
    <property type="protein sequence ID" value="AAX88384.1"/>
    <property type="molecule type" value="Genomic_DNA"/>
</dbReference>
<dbReference type="RefSeq" id="WP_011272541.1">
    <property type="nucleotide sequence ID" value="NC_007146.2"/>
</dbReference>
<dbReference type="SMR" id="Q4QKR3"/>
<dbReference type="GeneID" id="93220319"/>
<dbReference type="KEGG" id="hit:NTHI1580"/>
<dbReference type="HOGENOM" id="CLU_015846_11_2_6"/>
<dbReference type="UniPathway" id="UPA00078"/>
<dbReference type="Proteomes" id="UP000002525">
    <property type="component" value="Chromosome"/>
</dbReference>
<dbReference type="GO" id="GO:0008710">
    <property type="term" value="F:8-amino-7-oxononanoate synthase activity"/>
    <property type="evidence" value="ECO:0007669"/>
    <property type="project" value="UniProtKB-EC"/>
</dbReference>
<dbReference type="GO" id="GO:0030170">
    <property type="term" value="F:pyridoxal phosphate binding"/>
    <property type="evidence" value="ECO:0007669"/>
    <property type="project" value="InterPro"/>
</dbReference>
<dbReference type="GO" id="GO:0009102">
    <property type="term" value="P:biotin biosynthetic process"/>
    <property type="evidence" value="ECO:0007669"/>
    <property type="project" value="UniProtKB-UniPathway"/>
</dbReference>
<dbReference type="CDD" id="cd06454">
    <property type="entry name" value="KBL_like"/>
    <property type="match status" value="1"/>
</dbReference>
<dbReference type="Gene3D" id="3.90.1150.10">
    <property type="entry name" value="Aspartate Aminotransferase, domain 1"/>
    <property type="match status" value="1"/>
</dbReference>
<dbReference type="Gene3D" id="3.40.640.10">
    <property type="entry name" value="Type I PLP-dependent aspartate aminotransferase-like (Major domain)"/>
    <property type="match status" value="1"/>
</dbReference>
<dbReference type="InterPro" id="IPR001917">
    <property type="entry name" value="Aminotrans_II_pyridoxalP_BS"/>
</dbReference>
<dbReference type="InterPro" id="IPR004839">
    <property type="entry name" value="Aminotransferase_I/II_large"/>
</dbReference>
<dbReference type="InterPro" id="IPR050087">
    <property type="entry name" value="AON_synthase_class-II"/>
</dbReference>
<dbReference type="InterPro" id="IPR004723">
    <property type="entry name" value="AONS_Archaea/Proteobacteria"/>
</dbReference>
<dbReference type="InterPro" id="IPR015424">
    <property type="entry name" value="PyrdxlP-dep_Trfase"/>
</dbReference>
<dbReference type="InterPro" id="IPR015421">
    <property type="entry name" value="PyrdxlP-dep_Trfase_major"/>
</dbReference>
<dbReference type="InterPro" id="IPR015422">
    <property type="entry name" value="PyrdxlP-dep_Trfase_small"/>
</dbReference>
<dbReference type="NCBIfam" id="TIGR00858">
    <property type="entry name" value="bioF"/>
    <property type="match status" value="1"/>
</dbReference>
<dbReference type="PANTHER" id="PTHR13693:SF100">
    <property type="entry name" value="8-AMINO-7-OXONONANOATE SYNTHASE"/>
    <property type="match status" value="1"/>
</dbReference>
<dbReference type="PANTHER" id="PTHR13693">
    <property type="entry name" value="CLASS II AMINOTRANSFERASE/8-AMINO-7-OXONONANOATE SYNTHASE"/>
    <property type="match status" value="1"/>
</dbReference>
<dbReference type="Pfam" id="PF00155">
    <property type="entry name" value="Aminotran_1_2"/>
    <property type="match status" value="1"/>
</dbReference>
<dbReference type="SUPFAM" id="SSF53383">
    <property type="entry name" value="PLP-dependent transferases"/>
    <property type="match status" value="1"/>
</dbReference>
<dbReference type="PROSITE" id="PS00599">
    <property type="entry name" value="AA_TRANSFER_CLASS_2"/>
    <property type="match status" value="1"/>
</dbReference>
<name>BIOF_HAEI8</name>
<accession>Q4QKR3</accession>
<organism>
    <name type="scientific">Haemophilus influenzae (strain 86-028NP)</name>
    <dbReference type="NCBI Taxonomy" id="281310"/>
    <lineage>
        <taxon>Bacteria</taxon>
        <taxon>Pseudomonadati</taxon>
        <taxon>Pseudomonadota</taxon>
        <taxon>Gammaproteobacteria</taxon>
        <taxon>Pasteurellales</taxon>
        <taxon>Pasteurellaceae</taxon>
        <taxon>Haemophilus</taxon>
    </lineage>
</organism>
<gene>
    <name type="primary">bioF</name>
    <name type="ordered locus">NTHI1580</name>
</gene>
<keyword id="KW-0093">Biotin biosynthesis</keyword>
<keyword id="KW-0663">Pyridoxal phosphate</keyword>
<keyword id="KW-0808">Transferase</keyword>
<reference key="1">
    <citation type="journal article" date="2005" name="J. Bacteriol.">
        <title>Genomic sequence of an otitis media isolate of nontypeable Haemophilus influenzae: comparative study with H. influenzae serotype d, strain KW20.</title>
        <authorList>
            <person name="Harrison A."/>
            <person name="Dyer D.W."/>
            <person name="Gillaspy A."/>
            <person name="Ray W.C."/>
            <person name="Mungur R."/>
            <person name="Carson M.B."/>
            <person name="Zhong H."/>
            <person name="Gipson J."/>
            <person name="Gipson M."/>
            <person name="Johnson L.S."/>
            <person name="Lewis L."/>
            <person name="Bakaletz L.O."/>
            <person name="Munson R.S. Jr."/>
        </authorList>
    </citation>
    <scope>NUCLEOTIDE SEQUENCE [LARGE SCALE GENOMIC DNA]</scope>
    <source>
        <strain>86-028NP</strain>
    </source>
</reference>
<protein>
    <recommendedName>
        <fullName>Putative 8-amino-7-oxononanoate synthase</fullName>
        <shortName>AONS</shortName>
        <ecNumber>2.3.1.47</ecNumber>
    </recommendedName>
    <alternativeName>
        <fullName>7-keto-8-amino-pelargonic acid synthase</fullName>
        <shortName>7-KAP synthase</shortName>
    </alternativeName>
    <alternativeName>
        <fullName>8-amino-7-ketopelargonate synthase</fullName>
    </alternativeName>
</protein>
<feature type="chain" id="PRO_0000381004" description="Putative 8-amino-7-oxononanoate synthase">
    <location>
        <begin position="1"/>
        <end position="379"/>
    </location>
</feature>
<feature type="binding site" evidence="1">
    <location>
        <position position="18"/>
    </location>
    <ligand>
        <name>substrate</name>
    </ligand>
</feature>
<feature type="binding site" evidence="1">
    <location>
        <begin position="106"/>
        <end position="107"/>
    </location>
    <ligand>
        <name>pyridoxal 5'-phosphate</name>
        <dbReference type="ChEBI" id="CHEBI:597326"/>
    </ligand>
</feature>
<feature type="binding site" evidence="1">
    <location>
        <position position="130"/>
    </location>
    <ligand>
        <name>substrate</name>
    </ligand>
</feature>
<feature type="binding site" evidence="1">
    <location>
        <position position="178"/>
    </location>
    <ligand>
        <name>pyridoxal 5'-phosphate</name>
        <dbReference type="ChEBI" id="CHEBI:597326"/>
    </ligand>
</feature>
<feature type="binding site" evidence="1">
    <location>
        <begin position="204"/>
        <end position="207"/>
    </location>
    <ligand>
        <name>pyridoxal 5'-phosphate</name>
        <dbReference type="ChEBI" id="CHEBI:597326"/>
    </ligand>
</feature>
<feature type="binding site" evidence="1">
    <location>
        <begin position="235"/>
        <end position="238"/>
    </location>
    <ligand>
        <name>pyridoxal 5'-phosphate</name>
        <dbReference type="ChEBI" id="CHEBI:597326"/>
    </ligand>
</feature>
<feature type="binding site" evidence="1">
    <location>
        <position position="351"/>
    </location>
    <ligand>
        <name>substrate</name>
    </ligand>
</feature>
<feature type="modified residue" description="N6-(pyridoxal phosphate)lysine" evidence="1">
    <location>
        <position position="238"/>
    </location>
</feature>
<comment type="function">
    <text evidence="1">Catalyzes the decarboxylative condensation of pimeloyl-[acyl-carrier protein] and L-alanine to produce 8-amino-7-oxononanoate (AON), [acyl-carrier protein], and carbon dioxide.</text>
</comment>
<comment type="catalytic activity">
    <reaction>
        <text>6-carboxyhexanoyl-[ACP] + L-alanine + H(+) = (8S)-8-amino-7-oxononanoate + holo-[ACP] + CO2</text>
        <dbReference type="Rhea" id="RHEA:42288"/>
        <dbReference type="Rhea" id="RHEA-COMP:9685"/>
        <dbReference type="Rhea" id="RHEA-COMP:9955"/>
        <dbReference type="ChEBI" id="CHEBI:15378"/>
        <dbReference type="ChEBI" id="CHEBI:16526"/>
        <dbReference type="ChEBI" id="CHEBI:57972"/>
        <dbReference type="ChEBI" id="CHEBI:64479"/>
        <dbReference type="ChEBI" id="CHEBI:78846"/>
        <dbReference type="ChEBI" id="CHEBI:149468"/>
        <dbReference type="EC" id="2.3.1.47"/>
    </reaction>
</comment>
<comment type="cofactor">
    <cofactor evidence="1">
        <name>pyridoxal 5'-phosphate</name>
        <dbReference type="ChEBI" id="CHEBI:597326"/>
    </cofactor>
</comment>
<comment type="pathway">
    <text>Cofactor biosynthesis; biotin biosynthesis.</text>
</comment>
<comment type="subunit">
    <text evidence="1">Homodimer.</text>
</comment>
<comment type="similarity">
    <text evidence="2">Belongs to the class-II pyridoxal-phosphate-dependent aminotransferase family. BioF subfamily.</text>
</comment>
<evidence type="ECO:0000250" key="1"/>
<evidence type="ECO:0000305" key="2"/>